<dbReference type="EMBL" id="X17476">
    <property type="protein sequence ID" value="CAA35507.1"/>
    <property type="molecule type" value="Genomic_DNA"/>
</dbReference>
<dbReference type="SMR" id="P14864"/>
<dbReference type="GO" id="GO:0005737">
    <property type="term" value="C:cytoplasm"/>
    <property type="evidence" value="ECO:0007669"/>
    <property type="project" value="UniProtKB-SubCell"/>
</dbReference>
<dbReference type="GO" id="GO:0005525">
    <property type="term" value="F:GTP binding"/>
    <property type="evidence" value="ECO:0007669"/>
    <property type="project" value="UniProtKB-KW"/>
</dbReference>
<dbReference type="GO" id="GO:0003924">
    <property type="term" value="F:GTPase activity"/>
    <property type="evidence" value="ECO:0007669"/>
    <property type="project" value="InterPro"/>
</dbReference>
<dbReference type="GO" id="GO:0003746">
    <property type="term" value="F:translation elongation factor activity"/>
    <property type="evidence" value="ECO:0007669"/>
    <property type="project" value="UniProtKB-KW"/>
</dbReference>
<dbReference type="CDD" id="cd01883">
    <property type="entry name" value="EF1_alpha"/>
    <property type="match status" value="1"/>
</dbReference>
<dbReference type="CDD" id="cd03693">
    <property type="entry name" value="EF1_alpha_II"/>
    <property type="match status" value="1"/>
</dbReference>
<dbReference type="CDD" id="cd03705">
    <property type="entry name" value="EF1_alpha_III"/>
    <property type="match status" value="1"/>
</dbReference>
<dbReference type="FunFam" id="2.40.30.10:FF:000003">
    <property type="entry name" value="Elongation factor 1-alpha"/>
    <property type="match status" value="1"/>
</dbReference>
<dbReference type="FunFam" id="2.40.30.10:FF:000005">
    <property type="entry name" value="Elongation factor 1-alpha"/>
    <property type="match status" value="1"/>
</dbReference>
<dbReference type="FunFam" id="3.40.50.300:FF:000211">
    <property type="entry name" value="Elongation factor 1-alpha"/>
    <property type="match status" value="1"/>
</dbReference>
<dbReference type="Gene3D" id="3.40.50.300">
    <property type="entry name" value="P-loop containing nucleotide triphosphate hydrolases"/>
    <property type="match status" value="1"/>
</dbReference>
<dbReference type="Gene3D" id="2.40.30.10">
    <property type="entry name" value="Translation factors"/>
    <property type="match status" value="2"/>
</dbReference>
<dbReference type="HAMAP" id="MF_00118_A">
    <property type="entry name" value="EF_Tu_A"/>
    <property type="match status" value="1"/>
</dbReference>
<dbReference type="InterPro" id="IPR004161">
    <property type="entry name" value="EFTu-like_2"/>
</dbReference>
<dbReference type="InterPro" id="IPR031157">
    <property type="entry name" value="G_TR_CS"/>
</dbReference>
<dbReference type="InterPro" id="IPR054696">
    <property type="entry name" value="GTP-eEF1A_C"/>
</dbReference>
<dbReference type="InterPro" id="IPR027417">
    <property type="entry name" value="P-loop_NTPase"/>
</dbReference>
<dbReference type="InterPro" id="IPR000795">
    <property type="entry name" value="T_Tr_GTP-bd_dom"/>
</dbReference>
<dbReference type="InterPro" id="IPR050100">
    <property type="entry name" value="TRAFAC_GTPase_members"/>
</dbReference>
<dbReference type="InterPro" id="IPR009000">
    <property type="entry name" value="Transl_B-barrel_sf"/>
</dbReference>
<dbReference type="InterPro" id="IPR009001">
    <property type="entry name" value="Transl_elong_EF1A/Init_IF2_C"/>
</dbReference>
<dbReference type="InterPro" id="IPR004539">
    <property type="entry name" value="Transl_elong_EF1A_euk/arc"/>
</dbReference>
<dbReference type="NCBIfam" id="TIGR00483">
    <property type="entry name" value="EF-1_alpha"/>
    <property type="match status" value="1"/>
</dbReference>
<dbReference type="NCBIfam" id="NF008969">
    <property type="entry name" value="PRK12317.1"/>
    <property type="match status" value="1"/>
</dbReference>
<dbReference type="PANTHER" id="PTHR23115">
    <property type="entry name" value="TRANSLATION FACTOR"/>
    <property type="match status" value="1"/>
</dbReference>
<dbReference type="Pfam" id="PF22594">
    <property type="entry name" value="GTP-eEF1A_C"/>
    <property type="match status" value="1"/>
</dbReference>
<dbReference type="Pfam" id="PF00009">
    <property type="entry name" value="GTP_EFTU"/>
    <property type="match status" value="1"/>
</dbReference>
<dbReference type="Pfam" id="PF03144">
    <property type="entry name" value="GTP_EFTU_D2"/>
    <property type="match status" value="1"/>
</dbReference>
<dbReference type="PRINTS" id="PR00315">
    <property type="entry name" value="ELONGATNFCT"/>
</dbReference>
<dbReference type="SUPFAM" id="SSF50465">
    <property type="entry name" value="EF-Tu/eEF-1alpha/eIF2-gamma C-terminal domain"/>
    <property type="match status" value="1"/>
</dbReference>
<dbReference type="SUPFAM" id="SSF52540">
    <property type="entry name" value="P-loop containing nucleoside triphosphate hydrolases"/>
    <property type="match status" value="1"/>
</dbReference>
<dbReference type="SUPFAM" id="SSF50447">
    <property type="entry name" value="Translation proteins"/>
    <property type="match status" value="1"/>
</dbReference>
<dbReference type="PROSITE" id="PS00301">
    <property type="entry name" value="G_TR_1"/>
    <property type="match status" value="1"/>
</dbReference>
<dbReference type="PROSITE" id="PS51722">
    <property type="entry name" value="G_TR_2"/>
    <property type="match status" value="1"/>
</dbReference>
<sequence>MGKEKTHVNVVVIGHVDSGKSTTTGHLIYKCGGIDKRTIEKFEKEAAELGKGSFKYAWVLDKLKAERERGITIDIALWKFETPKYNVTVIDAPGHRDFIKNMITGTSQADCAILIIAGGTGEFEAGISKDGQTREHALLAFTLGFRQLIVAINKMDTTKWSQDRYNEIVKEVSGFIKKIGFNPKSVPFVPISGWHGDNMLDESTNMPWFKGWNKETKAGSKTGKTLLEAIDAIEPPVRPSDKPLRLPLQDVYKIGGIGTVPVGRVETGTIKAGMVVNFAPAAVTTEVKSVEMHHETLTEGLPGDNVGFNVKNVSVKDIRRGNVCSDSKNDPAKESASFTAQVIILNHPGQISAGYAPVLDCHTAHIACKFSELIEKIDRRSGKKMEDSPKFVKSGDSAIVKMVPSKPMCVEAYTDYPPLGRFAVRDMRQTVAVGVIKAVEKVDKAGKVTKAAAKASKK</sequence>
<feature type="initiator methionine" description="Removed" evidence="2">
    <location>
        <position position="1"/>
    </location>
</feature>
<feature type="chain" id="PRO_0000090965" description="Elongation factor 1-alpha">
    <location>
        <begin position="2"/>
        <end position="458"/>
    </location>
</feature>
<feature type="domain" description="tr-type G">
    <location>
        <begin position="5"/>
        <end position="240"/>
    </location>
</feature>
<feature type="region of interest" description="G1" evidence="1">
    <location>
        <begin position="14"/>
        <end position="21"/>
    </location>
</feature>
<feature type="region of interest" description="G2" evidence="1">
    <location>
        <begin position="70"/>
        <end position="74"/>
    </location>
</feature>
<feature type="region of interest" description="G3" evidence="1">
    <location>
        <begin position="91"/>
        <end position="94"/>
    </location>
</feature>
<feature type="region of interest" description="G4" evidence="1">
    <location>
        <begin position="153"/>
        <end position="156"/>
    </location>
</feature>
<feature type="region of interest" description="G5" evidence="1">
    <location>
        <begin position="192"/>
        <end position="194"/>
    </location>
</feature>
<feature type="binding site" evidence="1">
    <location>
        <begin position="14"/>
        <end position="21"/>
    </location>
    <ligand>
        <name>GTP</name>
        <dbReference type="ChEBI" id="CHEBI:37565"/>
    </ligand>
</feature>
<feature type="binding site" evidence="1">
    <location>
        <begin position="91"/>
        <end position="95"/>
    </location>
    <ligand>
        <name>GTP</name>
        <dbReference type="ChEBI" id="CHEBI:37565"/>
    </ligand>
</feature>
<feature type="binding site" evidence="1">
    <location>
        <begin position="153"/>
        <end position="156"/>
    </location>
    <ligand>
        <name>GTP</name>
        <dbReference type="ChEBI" id="CHEBI:37565"/>
    </ligand>
</feature>
<feature type="modified residue" description="N,N,N-trimethylglycine" evidence="2">
    <location>
        <position position="2"/>
    </location>
</feature>
<feature type="modified residue" description="N6,N6-dimethyllysine; alternate" evidence="2">
    <location>
        <position position="3"/>
    </location>
</feature>
<feature type="modified residue" description="N6-methyllysine; alternate" evidence="2">
    <location>
        <position position="3"/>
    </location>
</feature>
<feature type="modified residue" description="N6-methyllysine" evidence="2">
    <location>
        <position position="30"/>
    </location>
</feature>
<feature type="modified residue" description="N6,N6,N6-trimethyllysine" evidence="2">
    <location>
        <position position="79"/>
    </location>
</feature>
<feature type="modified residue" description="N6,N6-dimethyllysine; alternate" evidence="2">
    <location>
        <position position="316"/>
    </location>
</feature>
<feature type="modified residue" description="N6-methyllysine; alternate" evidence="2">
    <location>
        <position position="316"/>
    </location>
</feature>
<feature type="modified residue" description="N6-methyllysine" evidence="2">
    <location>
        <position position="390"/>
    </location>
</feature>
<keyword id="KW-0963">Cytoplasm</keyword>
<keyword id="KW-0251">Elongation factor</keyword>
<keyword id="KW-0342">GTP-binding</keyword>
<keyword id="KW-0488">Methylation</keyword>
<keyword id="KW-0547">Nucleotide-binding</keyword>
<keyword id="KW-0648">Protein biosynthesis</keyword>
<comment type="function">
    <text>This protein promotes the GTP-dependent binding of aminoacyl-tRNA to the A-site of ribosomes during protein biosynthesis.</text>
</comment>
<comment type="subcellular location">
    <subcellularLocation>
        <location>Cytoplasm</location>
    </subcellularLocation>
</comment>
<comment type="similarity">
    <text evidence="3">Belongs to the TRAFAC class translation factor GTPase superfamily. Classic translation factor GTPase family. EF-Tu/EF-1A subfamily.</text>
</comment>
<accession>P14864</accession>
<organism>
    <name type="scientific">Mucor circinelloides f. lusitanicus</name>
    <name type="common">Mucor racemosus var. lusitanicus</name>
    <dbReference type="NCBI Taxonomy" id="29924"/>
    <lineage>
        <taxon>Eukaryota</taxon>
        <taxon>Fungi</taxon>
        <taxon>Fungi incertae sedis</taxon>
        <taxon>Mucoromycota</taxon>
        <taxon>Mucoromycotina</taxon>
        <taxon>Mucoromycetes</taxon>
        <taxon>Mucorales</taxon>
        <taxon>Mucorineae</taxon>
        <taxon>Mucoraceae</taxon>
        <taxon>Mucor</taxon>
    </lineage>
</organism>
<protein>
    <recommendedName>
        <fullName>Elongation factor 1-alpha</fullName>
        <shortName>EF-1-alpha</shortName>
    </recommendedName>
</protein>
<reference key="1">
    <citation type="journal article" date="1987" name="Nucleic Acids Res.">
        <title>Sequence analysis of the EF-1 alpha gene family of Mucor racemosus.</title>
        <authorList>
            <person name="Sundstrom P."/>
            <person name="Lira L.M."/>
            <person name="Choi D."/>
            <person name="Linz J.E."/>
            <person name="Sypherd P.S."/>
        </authorList>
    </citation>
    <scope>NUCLEOTIDE SEQUENCE [GENOMIC DNA]</scope>
    <source>
        <strain>ATCC 1216b / BCRC 32522 / CBS 277.49 / NRRL 3631</strain>
    </source>
</reference>
<reference key="2">
    <citation type="submission" date="1990-01" db="EMBL/GenBank/DDBJ databases">
        <authorList>
            <person name="Sundstrom P."/>
        </authorList>
    </citation>
    <scope>SEQUENCE REVISION</scope>
</reference>
<name>EF1A2_MUCCL</name>
<evidence type="ECO:0000250" key="1"/>
<evidence type="ECO:0000250" key="2">
    <source>
        <dbReference type="UniProtKB" id="P02994"/>
    </source>
</evidence>
<evidence type="ECO:0000305" key="3"/>
<gene>
    <name type="primary">TEF-2</name>
</gene>
<proteinExistence type="inferred from homology"/>